<feature type="chain" id="PRO_0000286665" description="Ribosomal large subunit pseudouridine synthase C">
    <location>
        <begin position="1"/>
        <end position="305"/>
    </location>
</feature>
<feature type="domain" description="S4 RNA-binding" evidence="2">
    <location>
        <begin position="11"/>
        <end position="70"/>
    </location>
</feature>
<feature type="active site" evidence="1">
    <location>
        <position position="140"/>
    </location>
</feature>
<keyword id="KW-0413">Isomerase</keyword>
<keyword id="KW-0694">RNA-binding</keyword>
<keyword id="KW-0698">rRNA processing</keyword>
<evidence type="ECO:0000250" key="1"/>
<evidence type="ECO:0000255" key="2">
    <source>
        <dbReference type="PROSITE-ProRule" id="PRU00182"/>
    </source>
</evidence>
<evidence type="ECO:0000305" key="3"/>
<comment type="function">
    <text evidence="1">Responsible for synthesis of pseudouridine from uracil at positions 955, 2504 and 2580 in 23S ribosomal RNA.</text>
</comment>
<comment type="catalytic activity">
    <reaction>
        <text>uridine(955/2504/2580) in 23S rRNA = pseudouridine(955/2504/2580) in 23S rRNA</text>
        <dbReference type="Rhea" id="RHEA:42528"/>
        <dbReference type="Rhea" id="RHEA-COMP:10099"/>
        <dbReference type="Rhea" id="RHEA-COMP:10100"/>
        <dbReference type="ChEBI" id="CHEBI:65314"/>
        <dbReference type="ChEBI" id="CHEBI:65315"/>
        <dbReference type="EC" id="5.4.99.24"/>
    </reaction>
</comment>
<comment type="similarity">
    <text evidence="3">Belongs to the pseudouridine synthase RluA family.</text>
</comment>
<sequence>MIIDVNTPISSRLDKYLKRLYPLLTQGVIEKALRQKQITVNSQKAEASLRVKGGDKIFINDKFNLPVKQPEKLVFTDAEIKLAKKITTDYLIYEDDNLIAINKPAGLATQGGSKINLSIDSALKYLNYKGADFKLVHRLDKETSGLLLIAKNYLSNVKLHDAFKEKLVVKTYFAVTYGKPIKNVGEVRSNIEKSKGSTPKITDIYSENGKLAITYYKLLKSLDNNLFLIEFTPVTGRMHQLRLHAKLLGCPIVGDDKYGNKEIMPYSKYMFLHANNICLSEKIFGKEINLEAKLPFYFTDKFVEC</sequence>
<accession>Q4UKQ3</accession>
<dbReference type="EC" id="5.4.99.24"/>
<dbReference type="EMBL" id="CP000053">
    <property type="protein sequence ID" value="AAY61874.1"/>
    <property type="molecule type" value="Genomic_DNA"/>
</dbReference>
<dbReference type="SMR" id="Q4UKQ3"/>
<dbReference type="STRING" id="315456.RF_1023"/>
<dbReference type="KEGG" id="rfe:RF_1023"/>
<dbReference type="eggNOG" id="COG0564">
    <property type="taxonomic scope" value="Bacteria"/>
</dbReference>
<dbReference type="HOGENOM" id="CLU_016902_1_2_5"/>
<dbReference type="OrthoDB" id="9807829at2"/>
<dbReference type="Proteomes" id="UP000008548">
    <property type="component" value="Chromosome"/>
</dbReference>
<dbReference type="GO" id="GO:0160141">
    <property type="term" value="F:23S rRNA pseudouridine(955/2504/2580) synthase activity"/>
    <property type="evidence" value="ECO:0007669"/>
    <property type="project" value="UniProtKB-EC"/>
</dbReference>
<dbReference type="GO" id="GO:0003723">
    <property type="term" value="F:RNA binding"/>
    <property type="evidence" value="ECO:0007669"/>
    <property type="project" value="UniProtKB-KW"/>
</dbReference>
<dbReference type="GO" id="GO:0000455">
    <property type="term" value="P:enzyme-directed rRNA pseudouridine synthesis"/>
    <property type="evidence" value="ECO:0007669"/>
    <property type="project" value="UniProtKB-ARBA"/>
</dbReference>
<dbReference type="CDD" id="cd02869">
    <property type="entry name" value="PseudoU_synth_RluA_like"/>
    <property type="match status" value="1"/>
</dbReference>
<dbReference type="CDD" id="cd00165">
    <property type="entry name" value="S4"/>
    <property type="match status" value="1"/>
</dbReference>
<dbReference type="Gene3D" id="3.30.2350.10">
    <property type="entry name" value="Pseudouridine synthase"/>
    <property type="match status" value="1"/>
</dbReference>
<dbReference type="Gene3D" id="3.10.290.10">
    <property type="entry name" value="RNA-binding S4 domain"/>
    <property type="match status" value="1"/>
</dbReference>
<dbReference type="InterPro" id="IPR020103">
    <property type="entry name" value="PsdUridine_synth_cat_dom_sf"/>
</dbReference>
<dbReference type="InterPro" id="IPR006224">
    <property type="entry name" value="PsdUridine_synth_RluA-like_CS"/>
</dbReference>
<dbReference type="InterPro" id="IPR006145">
    <property type="entry name" value="PsdUridine_synth_RsuA/RluA"/>
</dbReference>
<dbReference type="InterPro" id="IPR050188">
    <property type="entry name" value="RluA_PseudoU_synthase"/>
</dbReference>
<dbReference type="InterPro" id="IPR002942">
    <property type="entry name" value="S4_RNA-bd"/>
</dbReference>
<dbReference type="InterPro" id="IPR036986">
    <property type="entry name" value="S4_RNA-bd_sf"/>
</dbReference>
<dbReference type="PANTHER" id="PTHR21600">
    <property type="entry name" value="MITOCHONDRIAL RNA PSEUDOURIDINE SYNTHASE"/>
    <property type="match status" value="1"/>
</dbReference>
<dbReference type="Pfam" id="PF00849">
    <property type="entry name" value="PseudoU_synth_2"/>
    <property type="match status" value="1"/>
</dbReference>
<dbReference type="Pfam" id="PF01479">
    <property type="entry name" value="S4"/>
    <property type="match status" value="1"/>
</dbReference>
<dbReference type="SMART" id="SM00363">
    <property type="entry name" value="S4"/>
    <property type="match status" value="1"/>
</dbReference>
<dbReference type="SUPFAM" id="SSF55174">
    <property type="entry name" value="Alpha-L RNA-binding motif"/>
    <property type="match status" value="1"/>
</dbReference>
<dbReference type="SUPFAM" id="SSF55120">
    <property type="entry name" value="Pseudouridine synthase"/>
    <property type="match status" value="1"/>
</dbReference>
<dbReference type="PROSITE" id="PS01129">
    <property type="entry name" value="PSI_RLU"/>
    <property type="match status" value="1"/>
</dbReference>
<dbReference type="PROSITE" id="PS50889">
    <property type="entry name" value="S4"/>
    <property type="match status" value="1"/>
</dbReference>
<reference key="1">
    <citation type="journal article" date="2005" name="PLoS Biol.">
        <title>The genome sequence of Rickettsia felis identifies the first putative conjugative plasmid in an obligate intracellular parasite.</title>
        <authorList>
            <person name="Ogata H."/>
            <person name="Renesto P."/>
            <person name="Audic S."/>
            <person name="Robert C."/>
            <person name="Blanc G."/>
            <person name="Fournier P.-E."/>
            <person name="Parinello H."/>
            <person name="Claverie J.-M."/>
            <person name="Raoult D."/>
        </authorList>
    </citation>
    <scope>NUCLEOTIDE SEQUENCE [LARGE SCALE GENOMIC DNA]</scope>
    <source>
        <strain>ATCC VR-1525 / URRWXCal2</strain>
    </source>
</reference>
<gene>
    <name type="primary">rluC</name>
    <name type="ordered locus">RF_1023</name>
</gene>
<organism>
    <name type="scientific">Rickettsia felis (strain ATCC VR-1525 / URRWXCal2)</name>
    <name type="common">Rickettsia azadi</name>
    <dbReference type="NCBI Taxonomy" id="315456"/>
    <lineage>
        <taxon>Bacteria</taxon>
        <taxon>Pseudomonadati</taxon>
        <taxon>Pseudomonadota</taxon>
        <taxon>Alphaproteobacteria</taxon>
        <taxon>Rickettsiales</taxon>
        <taxon>Rickettsiaceae</taxon>
        <taxon>Rickettsieae</taxon>
        <taxon>Rickettsia</taxon>
        <taxon>spotted fever group</taxon>
    </lineage>
</organism>
<proteinExistence type="inferred from homology"/>
<protein>
    <recommendedName>
        <fullName>Ribosomal large subunit pseudouridine synthase C</fullName>
        <ecNumber>5.4.99.24</ecNumber>
    </recommendedName>
    <alternativeName>
        <fullName>23S rRNA pseudouridine(955/2504/2580) synthase</fullName>
    </alternativeName>
    <alternativeName>
        <fullName>rRNA pseudouridylate synthase C</fullName>
    </alternativeName>
    <alternativeName>
        <fullName>rRNA-uridine isomerase C</fullName>
    </alternativeName>
</protein>
<name>RLUC_RICFE</name>